<evidence type="ECO:0000255" key="1">
    <source>
        <dbReference type="HAMAP-Rule" id="MF_01351"/>
    </source>
</evidence>
<comment type="function">
    <text evidence="1">NDH-1 shuttles electrons from NADH, via FMN and iron-sulfur (Fe-S) centers, to quinones in the respiratory chain. The immediate electron acceptor for the enzyme in this species is believed to be ubiquinone. Couples the redox reaction to proton translocation (for every two electrons transferred, four hydrogen ions are translocated across the cytoplasmic membrane), and thus conserves the redox energy in a proton gradient.</text>
</comment>
<comment type="catalytic activity">
    <reaction evidence="1">
        <text>a quinone + NADH + 5 H(+)(in) = a quinol + NAD(+) + 4 H(+)(out)</text>
        <dbReference type="Rhea" id="RHEA:57888"/>
        <dbReference type="ChEBI" id="CHEBI:15378"/>
        <dbReference type="ChEBI" id="CHEBI:24646"/>
        <dbReference type="ChEBI" id="CHEBI:57540"/>
        <dbReference type="ChEBI" id="CHEBI:57945"/>
        <dbReference type="ChEBI" id="CHEBI:132124"/>
    </reaction>
</comment>
<comment type="cofactor">
    <cofactor evidence="1">
        <name>[4Fe-4S] cluster</name>
        <dbReference type="ChEBI" id="CHEBI:49883"/>
    </cofactor>
    <text evidence="1">Binds 2 [4Fe-4S] clusters per subunit.</text>
</comment>
<comment type="subunit">
    <text evidence="1">NDH-1 is composed of 14 different subunits. Subunits NuoA, H, J, K, L, M, N constitute the membrane sector of the complex.</text>
</comment>
<comment type="subcellular location">
    <subcellularLocation>
        <location evidence="1">Cell inner membrane</location>
        <topology evidence="1">Peripheral membrane protein</topology>
    </subcellularLocation>
</comment>
<comment type="similarity">
    <text evidence="1">Belongs to the complex I 23 kDa subunit family.</text>
</comment>
<sequence length="162" mass="18706">MTAIQQFFKTFFLTELLKGLALTGRYTFKRKFTVQFPEEKTPISPRFRGLHALRRYENGEERCIACKLCEAVCPALAITIESETRADNTRRTTRYDIDLTKCIFCGFCEESCPVDSIVETQILEYHGEKRGDLYFTKDMLLAVGDRYEKEIAAAKAADARYR</sequence>
<dbReference type="EC" id="7.1.1.-" evidence="1"/>
<dbReference type="EMBL" id="CP000546">
    <property type="protein sequence ID" value="ABN00870.1"/>
    <property type="molecule type" value="Genomic_DNA"/>
</dbReference>
<dbReference type="RefSeq" id="WP_004186558.1">
    <property type="nucleotide sequence ID" value="NC_008836.1"/>
</dbReference>
<dbReference type="SMR" id="A2S451"/>
<dbReference type="GeneID" id="93059702"/>
<dbReference type="KEGG" id="bml:BMA10229_A0729"/>
<dbReference type="HOGENOM" id="CLU_067218_5_1_4"/>
<dbReference type="Proteomes" id="UP000002283">
    <property type="component" value="Chromosome I"/>
</dbReference>
<dbReference type="GO" id="GO:0005886">
    <property type="term" value="C:plasma membrane"/>
    <property type="evidence" value="ECO:0007669"/>
    <property type="project" value="UniProtKB-SubCell"/>
</dbReference>
<dbReference type="GO" id="GO:0051539">
    <property type="term" value="F:4 iron, 4 sulfur cluster binding"/>
    <property type="evidence" value="ECO:0007669"/>
    <property type="project" value="UniProtKB-KW"/>
</dbReference>
<dbReference type="GO" id="GO:0005506">
    <property type="term" value="F:iron ion binding"/>
    <property type="evidence" value="ECO:0007669"/>
    <property type="project" value="UniProtKB-UniRule"/>
</dbReference>
<dbReference type="GO" id="GO:0050136">
    <property type="term" value="F:NADH:ubiquinone reductase (non-electrogenic) activity"/>
    <property type="evidence" value="ECO:0007669"/>
    <property type="project" value="UniProtKB-UniRule"/>
</dbReference>
<dbReference type="GO" id="GO:0048038">
    <property type="term" value="F:quinone binding"/>
    <property type="evidence" value="ECO:0007669"/>
    <property type="project" value="UniProtKB-KW"/>
</dbReference>
<dbReference type="GO" id="GO:0009060">
    <property type="term" value="P:aerobic respiration"/>
    <property type="evidence" value="ECO:0007669"/>
    <property type="project" value="TreeGrafter"/>
</dbReference>
<dbReference type="FunFam" id="3.30.70.3270:FF:000003">
    <property type="entry name" value="NADH-quinone oxidoreductase subunit I"/>
    <property type="match status" value="1"/>
</dbReference>
<dbReference type="Gene3D" id="3.30.70.3270">
    <property type="match status" value="1"/>
</dbReference>
<dbReference type="HAMAP" id="MF_01351">
    <property type="entry name" value="NDH1_NuoI"/>
    <property type="match status" value="1"/>
</dbReference>
<dbReference type="InterPro" id="IPR017896">
    <property type="entry name" value="4Fe4S_Fe-S-bd"/>
</dbReference>
<dbReference type="InterPro" id="IPR017900">
    <property type="entry name" value="4Fe4S_Fe_S_CS"/>
</dbReference>
<dbReference type="InterPro" id="IPR010226">
    <property type="entry name" value="NADH_quinone_OxRdtase_chainI"/>
</dbReference>
<dbReference type="NCBIfam" id="TIGR01971">
    <property type="entry name" value="NuoI"/>
    <property type="match status" value="1"/>
</dbReference>
<dbReference type="NCBIfam" id="NF004538">
    <property type="entry name" value="PRK05888.1-4"/>
    <property type="match status" value="1"/>
</dbReference>
<dbReference type="NCBIfam" id="NF004539">
    <property type="entry name" value="PRK05888.1-5"/>
    <property type="match status" value="1"/>
</dbReference>
<dbReference type="PANTHER" id="PTHR10849:SF20">
    <property type="entry name" value="NADH DEHYDROGENASE [UBIQUINONE] IRON-SULFUR PROTEIN 8, MITOCHONDRIAL"/>
    <property type="match status" value="1"/>
</dbReference>
<dbReference type="PANTHER" id="PTHR10849">
    <property type="entry name" value="NADH DEHYDROGENASE UBIQUINONE IRON-SULFUR PROTEIN 8, MITOCHONDRIAL"/>
    <property type="match status" value="1"/>
</dbReference>
<dbReference type="Pfam" id="PF12838">
    <property type="entry name" value="Fer4_7"/>
    <property type="match status" value="1"/>
</dbReference>
<dbReference type="SUPFAM" id="SSF54862">
    <property type="entry name" value="4Fe-4S ferredoxins"/>
    <property type="match status" value="1"/>
</dbReference>
<dbReference type="PROSITE" id="PS00198">
    <property type="entry name" value="4FE4S_FER_1"/>
    <property type="match status" value="2"/>
</dbReference>
<dbReference type="PROSITE" id="PS51379">
    <property type="entry name" value="4FE4S_FER_2"/>
    <property type="match status" value="2"/>
</dbReference>
<feature type="chain" id="PRO_1000067763" description="NADH-quinone oxidoreductase subunit I">
    <location>
        <begin position="1"/>
        <end position="162"/>
    </location>
</feature>
<feature type="domain" description="4Fe-4S ferredoxin-type 1" evidence="1">
    <location>
        <begin position="54"/>
        <end position="83"/>
    </location>
</feature>
<feature type="domain" description="4Fe-4S ferredoxin-type 2" evidence="1">
    <location>
        <begin position="93"/>
        <end position="122"/>
    </location>
</feature>
<feature type="binding site" evidence="1">
    <location>
        <position position="63"/>
    </location>
    <ligand>
        <name>[4Fe-4S] cluster</name>
        <dbReference type="ChEBI" id="CHEBI:49883"/>
        <label>1</label>
    </ligand>
</feature>
<feature type="binding site" evidence="1">
    <location>
        <position position="66"/>
    </location>
    <ligand>
        <name>[4Fe-4S] cluster</name>
        <dbReference type="ChEBI" id="CHEBI:49883"/>
        <label>1</label>
    </ligand>
</feature>
<feature type="binding site" evidence="1">
    <location>
        <position position="69"/>
    </location>
    <ligand>
        <name>[4Fe-4S] cluster</name>
        <dbReference type="ChEBI" id="CHEBI:49883"/>
        <label>1</label>
    </ligand>
</feature>
<feature type="binding site" evidence="1">
    <location>
        <position position="73"/>
    </location>
    <ligand>
        <name>[4Fe-4S] cluster</name>
        <dbReference type="ChEBI" id="CHEBI:49883"/>
        <label>2</label>
    </ligand>
</feature>
<feature type="binding site" evidence="1">
    <location>
        <position position="102"/>
    </location>
    <ligand>
        <name>[4Fe-4S] cluster</name>
        <dbReference type="ChEBI" id="CHEBI:49883"/>
        <label>2</label>
    </ligand>
</feature>
<feature type="binding site" evidence="1">
    <location>
        <position position="105"/>
    </location>
    <ligand>
        <name>[4Fe-4S] cluster</name>
        <dbReference type="ChEBI" id="CHEBI:49883"/>
        <label>2</label>
    </ligand>
</feature>
<feature type="binding site" evidence="1">
    <location>
        <position position="108"/>
    </location>
    <ligand>
        <name>[4Fe-4S] cluster</name>
        <dbReference type="ChEBI" id="CHEBI:49883"/>
        <label>2</label>
    </ligand>
</feature>
<feature type="binding site" evidence="1">
    <location>
        <position position="112"/>
    </location>
    <ligand>
        <name>[4Fe-4S] cluster</name>
        <dbReference type="ChEBI" id="CHEBI:49883"/>
        <label>1</label>
    </ligand>
</feature>
<protein>
    <recommendedName>
        <fullName evidence="1">NADH-quinone oxidoreductase subunit I</fullName>
        <ecNumber evidence="1">7.1.1.-</ecNumber>
    </recommendedName>
    <alternativeName>
        <fullName evidence="1">NADH dehydrogenase I subunit I</fullName>
    </alternativeName>
    <alternativeName>
        <fullName evidence="1">NDH-1 subunit I</fullName>
    </alternativeName>
</protein>
<keyword id="KW-0004">4Fe-4S</keyword>
<keyword id="KW-0997">Cell inner membrane</keyword>
<keyword id="KW-1003">Cell membrane</keyword>
<keyword id="KW-0408">Iron</keyword>
<keyword id="KW-0411">Iron-sulfur</keyword>
<keyword id="KW-0472">Membrane</keyword>
<keyword id="KW-0479">Metal-binding</keyword>
<keyword id="KW-0520">NAD</keyword>
<keyword id="KW-0874">Quinone</keyword>
<keyword id="KW-0677">Repeat</keyword>
<keyword id="KW-1278">Translocase</keyword>
<keyword id="KW-0830">Ubiquinone</keyword>
<gene>
    <name evidence="1" type="primary">nuoI</name>
    <name type="ordered locus">BMA10229_A0729</name>
</gene>
<organism>
    <name type="scientific">Burkholderia mallei (strain NCTC 10229)</name>
    <dbReference type="NCBI Taxonomy" id="412022"/>
    <lineage>
        <taxon>Bacteria</taxon>
        <taxon>Pseudomonadati</taxon>
        <taxon>Pseudomonadota</taxon>
        <taxon>Betaproteobacteria</taxon>
        <taxon>Burkholderiales</taxon>
        <taxon>Burkholderiaceae</taxon>
        <taxon>Burkholderia</taxon>
        <taxon>pseudomallei group</taxon>
    </lineage>
</organism>
<accession>A2S451</accession>
<proteinExistence type="inferred from homology"/>
<name>NUOI_BURM9</name>
<reference key="1">
    <citation type="journal article" date="2010" name="Genome Biol. Evol.">
        <title>Continuing evolution of Burkholderia mallei through genome reduction and large-scale rearrangements.</title>
        <authorList>
            <person name="Losada L."/>
            <person name="Ronning C.M."/>
            <person name="DeShazer D."/>
            <person name="Woods D."/>
            <person name="Fedorova N."/>
            <person name="Kim H.S."/>
            <person name="Shabalina S.A."/>
            <person name="Pearson T.R."/>
            <person name="Brinkac L."/>
            <person name="Tan P."/>
            <person name="Nandi T."/>
            <person name="Crabtree J."/>
            <person name="Badger J."/>
            <person name="Beckstrom-Sternberg S."/>
            <person name="Saqib M."/>
            <person name="Schutzer S.E."/>
            <person name="Keim P."/>
            <person name="Nierman W.C."/>
        </authorList>
    </citation>
    <scope>NUCLEOTIDE SEQUENCE [LARGE SCALE GENOMIC DNA]</scope>
    <source>
        <strain>NCTC 10229</strain>
    </source>
</reference>